<proteinExistence type="inferred from homology"/>
<keyword id="KW-0150">Chloroplast</keyword>
<keyword id="KW-0472">Membrane</keyword>
<keyword id="KW-0602">Photosynthesis</keyword>
<keyword id="KW-0604">Photosystem II</keyword>
<keyword id="KW-0934">Plastid</keyword>
<keyword id="KW-1185">Reference proteome</keyword>
<keyword id="KW-0793">Thylakoid</keyword>
<reference key="1">
    <citation type="journal article" date="2007" name="Mol. Genet. Genomics">
        <title>Chloroplast genomes of the diatoms Phaeodactylum tricornutum and Thalassiosira pseudonana: comparison with other plastid genomes of the red lineage.</title>
        <authorList>
            <person name="Oudot-Le Secq M.-P."/>
            <person name="Grimwood J."/>
            <person name="Shapiro H."/>
            <person name="Armbrust E.V."/>
            <person name="Bowler C."/>
            <person name="Green B.R."/>
        </authorList>
    </citation>
    <scope>NUCLEOTIDE SEQUENCE [LARGE SCALE GENOMIC DNA]</scope>
    <source>
        <strain>CCAP 1055/1</strain>
    </source>
</reference>
<gene>
    <name evidence="1" type="primary">psb28</name>
    <name evidence="1" type="synonym">psbW</name>
</gene>
<comment type="subunit">
    <text evidence="1">Part of the photosystem II complex.</text>
</comment>
<comment type="subcellular location">
    <subcellularLocation>
        <location evidence="1">Plastid</location>
        <location evidence="1">Chloroplast thylakoid membrane</location>
        <topology evidence="1">Peripheral membrane protein</topology>
        <orientation evidence="1">Stromal side</orientation>
    </subcellularLocation>
</comment>
<comment type="similarity">
    <text evidence="1">Belongs to the Psb28 family.</text>
</comment>
<evidence type="ECO:0000255" key="1">
    <source>
        <dbReference type="HAMAP-Rule" id="MF_01370"/>
    </source>
</evidence>
<organism>
    <name type="scientific">Phaeodactylum tricornutum (strain CCAP 1055/1)</name>
    <dbReference type="NCBI Taxonomy" id="556484"/>
    <lineage>
        <taxon>Eukaryota</taxon>
        <taxon>Sar</taxon>
        <taxon>Stramenopiles</taxon>
        <taxon>Ochrophyta</taxon>
        <taxon>Bacillariophyta</taxon>
        <taxon>Bacillariophyceae</taxon>
        <taxon>Bacillariophycidae</taxon>
        <taxon>Naviculales</taxon>
        <taxon>Phaeodactylaceae</taxon>
        <taxon>Phaeodactylum</taxon>
    </lineage>
</organism>
<feature type="chain" id="PRO_0000275699" description="Photosystem II reaction center Psb28 protein">
    <location>
        <begin position="1"/>
        <end position="115"/>
    </location>
</feature>
<accession>A0T0H5</accession>
<name>PSB28_PHATC</name>
<protein>
    <recommendedName>
        <fullName evidence="1">Photosystem II reaction center Psb28 protein</fullName>
    </recommendedName>
    <alternativeName>
        <fullName evidence="1">Photosystem II 13 kDa protein</fullName>
    </alternativeName>
    <alternativeName>
        <fullName evidence="1">Photosystem II reaction center W protein</fullName>
    </alternativeName>
</protein>
<geneLocation type="chloroplast"/>
<dbReference type="EMBL" id="EF067920">
    <property type="protein sequence ID" value="ABK20673.1"/>
    <property type="molecule type" value="Genomic_DNA"/>
</dbReference>
<dbReference type="RefSeq" id="YP_874450.1">
    <property type="nucleotide sequence ID" value="NC_008588.1"/>
</dbReference>
<dbReference type="SMR" id="A0T0H5"/>
<dbReference type="STRING" id="556484.A0T0H5"/>
<dbReference type="GeneID" id="4524551"/>
<dbReference type="InParanoid" id="A0T0H5"/>
<dbReference type="Proteomes" id="UP000000759">
    <property type="component" value="Chloroplast"/>
</dbReference>
<dbReference type="GO" id="GO:0009535">
    <property type="term" value="C:chloroplast thylakoid membrane"/>
    <property type="evidence" value="ECO:0007669"/>
    <property type="project" value="UniProtKB-SubCell"/>
</dbReference>
<dbReference type="GO" id="GO:0009523">
    <property type="term" value="C:photosystem II"/>
    <property type="evidence" value="ECO:0007669"/>
    <property type="project" value="UniProtKB-KW"/>
</dbReference>
<dbReference type="GO" id="GO:0015979">
    <property type="term" value="P:photosynthesis"/>
    <property type="evidence" value="ECO:0007669"/>
    <property type="project" value="UniProtKB-UniRule"/>
</dbReference>
<dbReference type="FunFam" id="2.40.30.220:FF:000001">
    <property type="entry name" value="Photosystem II reaction center Psb28 protein"/>
    <property type="match status" value="1"/>
</dbReference>
<dbReference type="Gene3D" id="2.40.30.220">
    <property type="entry name" value="Photosystem II Psb28"/>
    <property type="match status" value="1"/>
</dbReference>
<dbReference type="HAMAP" id="MF_01370">
    <property type="entry name" value="PSII_Psb28"/>
    <property type="match status" value="1"/>
</dbReference>
<dbReference type="InterPro" id="IPR038676">
    <property type="entry name" value="Psb28_c1_sf"/>
</dbReference>
<dbReference type="InterPro" id="IPR005610">
    <property type="entry name" value="PSII_Psb28_class-1"/>
</dbReference>
<dbReference type="NCBIfam" id="TIGR03047">
    <property type="entry name" value="PS_II_psb28"/>
    <property type="match status" value="1"/>
</dbReference>
<dbReference type="PANTHER" id="PTHR34963">
    <property type="match status" value="1"/>
</dbReference>
<dbReference type="PANTHER" id="PTHR34963:SF2">
    <property type="entry name" value="PHOTOSYSTEM II REACTION CENTER PSB28 PROTEIN, CHLOROPLASTIC"/>
    <property type="match status" value="1"/>
</dbReference>
<dbReference type="Pfam" id="PF03912">
    <property type="entry name" value="Psb28"/>
    <property type="match status" value="1"/>
</dbReference>
<sequence>MEAKIQFIKGLDEKVLPDVRLTRSKDGSTGTATFRFKNPNILDKTTAKEGEITGMYLIDEEGILETRDVNARFVNGKPEAIESIYIMKSPEAWDRFMRFMERYGETNGLVFSKAS</sequence>